<organism>
    <name type="scientific">Methanopyrus kandleri (strain AV19 / DSM 6324 / JCM 9639 / NBRC 100938)</name>
    <dbReference type="NCBI Taxonomy" id="190192"/>
    <lineage>
        <taxon>Archaea</taxon>
        <taxon>Methanobacteriati</taxon>
        <taxon>Methanobacteriota</taxon>
        <taxon>Methanomada group</taxon>
        <taxon>Methanopyri</taxon>
        <taxon>Methanopyrales</taxon>
        <taxon>Methanopyraceae</taxon>
        <taxon>Methanopyrus</taxon>
    </lineage>
</organism>
<evidence type="ECO:0000255" key="1">
    <source>
        <dbReference type="HAMAP-Rule" id="MF_01404"/>
    </source>
</evidence>
<accession>Q8TXD4</accession>
<keyword id="KW-0210">Decarboxylase</keyword>
<keyword id="KW-0456">Lyase</keyword>
<keyword id="KW-0670">Pyruvate</keyword>
<keyword id="KW-1185">Reference proteome</keyword>
<reference key="1">
    <citation type="journal article" date="2002" name="Proc. Natl. Acad. Sci. U.S.A.">
        <title>The complete genome of hyperthermophile Methanopyrus kandleri AV19 and monophyly of archaeal methanogens.</title>
        <authorList>
            <person name="Slesarev A.I."/>
            <person name="Mezhevaya K.V."/>
            <person name="Makarova K.S."/>
            <person name="Polushin N.N."/>
            <person name="Shcherbinina O.V."/>
            <person name="Shakhova V.V."/>
            <person name="Belova G.I."/>
            <person name="Aravind L."/>
            <person name="Natale D.A."/>
            <person name="Rogozin I.B."/>
            <person name="Tatusov R.L."/>
            <person name="Wolf Y.I."/>
            <person name="Stetter K.O."/>
            <person name="Malykh A.G."/>
            <person name="Koonin E.V."/>
            <person name="Kozyavkin S.A."/>
        </authorList>
    </citation>
    <scope>NUCLEOTIDE SEQUENCE [LARGE SCALE GENOMIC DNA]</scope>
    <source>
        <strain>AV19 / DSM 6324 / JCM 9639 / NBRC 100938</strain>
    </source>
</reference>
<proteinExistence type="inferred from homology"/>
<protein>
    <recommendedName>
        <fullName evidence="1">Pyruvoyl-dependent arginine decarboxylase</fullName>
        <shortName evidence="1">PvlArgDC</shortName>
        <ecNumber evidence="1">4.1.1.19</ecNumber>
    </recommendedName>
    <component>
        <recommendedName>
            <fullName evidence="1">Pyruvoyl-dependent arginine decarboxylase subunit beta</fullName>
        </recommendedName>
    </component>
    <component>
        <recommendedName>
            <fullName evidence="1">Pyruvoyl-dependent arginine decarboxylase subunit alpha</fullName>
        </recommendedName>
    </component>
</protein>
<feature type="chain" id="PRO_0000023316" description="Pyruvoyl-dependent arginine decarboxylase subunit beta" evidence="1">
    <location>
        <begin position="1"/>
        <end position="41"/>
    </location>
</feature>
<feature type="chain" id="PRO_0000023317" description="Pyruvoyl-dependent arginine decarboxylase subunit alpha" evidence="1">
    <location>
        <begin position="42"/>
        <end position="150"/>
    </location>
</feature>
<feature type="site" description="Cleavage (non-hydrolytic)" evidence="1">
    <location>
        <begin position="41"/>
        <end position="42"/>
    </location>
</feature>
<feature type="modified residue" description="Pyruvic acid (Ser)" evidence="1">
    <location>
        <position position="42"/>
    </location>
</feature>
<comment type="catalytic activity">
    <reaction evidence="1">
        <text>L-arginine + H(+) = agmatine + CO2</text>
        <dbReference type="Rhea" id="RHEA:17641"/>
        <dbReference type="ChEBI" id="CHEBI:15378"/>
        <dbReference type="ChEBI" id="CHEBI:16526"/>
        <dbReference type="ChEBI" id="CHEBI:32682"/>
        <dbReference type="ChEBI" id="CHEBI:58145"/>
        <dbReference type="EC" id="4.1.1.19"/>
    </reaction>
</comment>
<comment type="cofactor">
    <cofactor evidence="1">
        <name>pyruvate</name>
        <dbReference type="ChEBI" id="CHEBI:15361"/>
    </cofactor>
    <text evidence="1">Binds 1 pyruvoyl group covalently per subunit.</text>
</comment>
<comment type="similarity">
    <text evidence="1">Belongs to the PdaD family.</text>
</comment>
<dbReference type="EC" id="4.1.1.19" evidence="1"/>
<dbReference type="EMBL" id="AE009439">
    <property type="protein sequence ID" value="AAM01954.1"/>
    <property type="molecule type" value="Genomic_DNA"/>
</dbReference>
<dbReference type="SMR" id="Q8TXD4"/>
<dbReference type="STRING" id="190192.MK0740"/>
<dbReference type="PaxDb" id="190192-MK0740"/>
<dbReference type="EnsemblBacteria" id="AAM01954">
    <property type="protein sequence ID" value="AAM01954"/>
    <property type="gene ID" value="MK0740"/>
</dbReference>
<dbReference type="KEGG" id="mka:MK0740"/>
<dbReference type="HOGENOM" id="CLU_114389_2_0_2"/>
<dbReference type="InParanoid" id="Q8TXD4"/>
<dbReference type="Proteomes" id="UP000001826">
    <property type="component" value="Chromosome"/>
</dbReference>
<dbReference type="GO" id="GO:0008792">
    <property type="term" value="F:arginine decarboxylase activity"/>
    <property type="evidence" value="ECO:0007669"/>
    <property type="project" value="UniProtKB-UniRule"/>
</dbReference>
<dbReference type="GO" id="GO:0006527">
    <property type="term" value="P:arginine catabolic process"/>
    <property type="evidence" value="ECO:0007669"/>
    <property type="project" value="InterPro"/>
</dbReference>
<dbReference type="Gene3D" id="3.50.20.10">
    <property type="entry name" value="Pyruvoyl-Dependent Histidine Decarboxylase, subunit B"/>
    <property type="match status" value="1"/>
</dbReference>
<dbReference type="HAMAP" id="MF_01404">
    <property type="entry name" value="PvlArgDC"/>
    <property type="match status" value="1"/>
</dbReference>
<dbReference type="InterPro" id="IPR016104">
    <property type="entry name" value="Pyr-dep_his/arg-deCO2ase"/>
</dbReference>
<dbReference type="InterPro" id="IPR016105">
    <property type="entry name" value="Pyr-dep_his/arg-deCO2ase_sand"/>
</dbReference>
<dbReference type="InterPro" id="IPR002724">
    <property type="entry name" value="Pyruvoyl-dep_arg_deCO2ase"/>
</dbReference>
<dbReference type="PANTHER" id="PTHR40438">
    <property type="entry name" value="PYRUVOYL-DEPENDENT ARGININE DECARBOXYLASE"/>
    <property type="match status" value="1"/>
</dbReference>
<dbReference type="PANTHER" id="PTHR40438:SF1">
    <property type="entry name" value="PYRUVOYL-DEPENDENT ARGININE DECARBOXYLASE"/>
    <property type="match status" value="1"/>
</dbReference>
<dbReference type="Pfam" id="PF01862">
    <property type="entry name" value="PvlArgDC"/>
    <property type="match status" value="1"/>
</dbReference>
<dbReference type="PIRSF" id="PIRSF005216">
    <property type="entry name" value="Pyruvoyl-dep_arg_deCO2ase"/>
    <property type="match status" value="1"/>
</dbReference>
<dbReference type="SFLD" id="SFLDF00471">
    <property type="entry name" value="Pyruvoyl-dependent_arginine_de"/>
    <property type="match status" value="1"/>
</dbReference>
<dbReference type="SFLD" id="SFLDG01170">
    <property type="entry name" value="Pyruvoyl-dependent_arginine_de"/>
    <property type="match status" value="1"/>
</dbReference>
<dbReference type="SFLD" id="SFLDS00055">
    <property type="entry name" value="Pyruvoyl-Dependent_Histidine/A"/>
    <property type="match status" value="1"/>
</dbReference>
<dbReference type="SUPFAM" id="SSF56271">
    <property type="entry name" value="Pyruvoyl-dependent histidine and arginine decarboxylases"/>
    <property type="match status" value="1"/>
</dbReference>
<sequence length="150" mass="15596">MGVPKKYALVSGTGEADTSLAAFDAALIDAGIGDCNLVELSSILPPNAEEDDLPEFPPGSIVPAVVAKAVGRGLVSSCICVGRLESGLGIVSERAATDSVETVRRLAKRDVEEMARLRGEKLVEVRTVTASTEPEDAEWAAAVAAVVFWG</sequence>
<gene>
    <name evidence="1" type="primary">pdaD</name>
    <name type="ordered locus">MK0740</name>
</gene>
<name>PDAD_METKA</name>